<name>WASC5_PONAB</name>
<accession>Q5R5P0</accession>
<proteinExistence type="evidence at transcript level"/>
<sequence>MLDFLAENNLCGQAILRIVSCGNAIIAELLRLSEFIPAVFRLKDRADQQKYGDIIFDFSYFKGPELWESKLDAKPELQDLDEEFRENNIEIVTRFYLAFQSVHKYIVDLNRYLDDLNEGVYIQQTLETVLLNEDGKQLLCEALYLYGVMLLVIDQKIEGEVRERMLVSYYRYSAARSSADSNMDDICKLLRSTGYSSQPGARRPPNYPESYFQRVPINESFISMVIGRLRSDDIYNQVSAYPLPEHRSTALANQAAMLYVILYFEPSILHTHQAKMREIVDKYFPDNWVISIYMGITVNLVDAWEPYKAAKTALNNTLDLSNVREQASRYATVSERVHAQVQQFLKEGYLREEMVLDNIPKLLNCLRDCNVAIRWLMLHTADSACDPNNKRLRQIKDQILTDSRYNPRILFQLLLDTAQFEFILKEMFKQMLSEKQTKWEHYKKEGSERMTELADVFSGVKPLTRVEKNENLQAWFREISKQILSLNYDDSTAAGRKTVQLIQALEEVQEFHQLESNLQVCQFLADTRKFLHQMIRTINIKEEVLITMQIVGDLSFAWQLIDSFTSIMQESIRVNPSMVTKLRATFLKLASALDLPLLRINQANSPDLLSVSQYYSGELVSYVRKVLQIIPESMFTSLLKIIKLQTHDIIEVPTRLDKDKLRDYAQLGPRYEVAKLTHAISIFTEGILMMKTTLVGIIKVDPKQLLEDGIRKELVKRVAFALHRGLIFNPRAKPSELMPKLKELGATMDGFHRSFEYIQDYVNIYGLKIWQEEVSRIINYNVEQECNNFLRTKIQDWQSMYQSTHIPIPKFTPVDESVTFIGRLCREILRITDPKMTCHIDQLNTWYDMKTHQEVTSSRLFSEIQTTLGTFGLNGLDRLLCFMIVKELQNFLSMFQKIILRDRTVQDTLKTLMNAVSPLKSIVANSNKIYFSAIAKTQKIWTAYLEAIMKVGQMQILRQQIANELNYSCRFDSKHLAAALENLNKALLADIEAHYQDPSLPYPKEDNTLLYEITAYLEAAGIHNPLNKIYITTKRLPYFPIVNFLFLIAQLPKLQYNKNLGMVCRKPTDPVDWPPLVLGLLTLLKQFHSRYTEQFLALIGQFICSTVEQCTSQKIPEIPADVVGALLFLEDYARYTKLPRRVAEAHVPNFIFDEFRTVL</sequence>
<gene>
    <name evidence="1" type="primary">WASHC5</name>
</gene>
<feature type="chain" id="PRO_0000318930" description="WASH complex subunit 5">
    <location>
        <begin position="1"/>
        <end position="1159"/>
    </location>
</feature>
<feature type="modified residue" description="Phosphoserine" evidence="1">
    <location>
        <position position="917"/>
    </location>
</feature>
<evidence type="ECO:0000250" key="1">
    <source>
        <dbReference type="UniProtKB" id="Q12768"/>
    </source>
</evidence>
<evidence type="ECO:0000305" key="2"/>
<comment type="function">
    <text evidence="1">Acts as a component of the WASH core complex that functions as a nucleation-promoting factor (NPF) at the surface of endosomes, where it recruits and activates the Arp2/3 complex to induce actin polymerization, playing a key role in the fission of tubules that serve as transport intermediates during endosome sorting. May be involved in axonal outgrowth. Involved in cellular localization of ADRB2. Involved in cellular trafficking of BLOC-1 complex cargos such as ATP7A and VAMP7 (By similarity).</text>
</comment>
<comment type="subunit">
    <text evidence="1">Component of the WASH core complex also described as WASH regulatory complex (SHRC) composed of WASH (WASHC1, WASH2P or WASH3P), WASHC2 (WASHC2A or WASHC2C), WASHC3, WASHC4 and WASHC5. The WASH core complex associates via WASHC2 with the F-actin-capping protein dimer (formed by CAPZA1, CAPZA2 or CAPZA3 and CAPZB) in a transient or substoichiometric manner which was initially described as WASH complex. Interacts with VCP, PI4K2A (By similarity).</text>
</comment>
<comment type="subcellular location">
    <subcellularLocation>
        <location evidence="1">Cytoplasm</location>
        <location evidence="1">Cytosol</location>
    </subcellularLocation>
    <subcellularLocation>
        <location evidence="1">Endoplasmic reticulum</location>
    </subcellularLocation>
    <subcellularLocation>
        <location evidence="1">Early endosome</location>
    </subcellularLocation>
    <text evidence="1">Colocalizes with SYP/synaptophysin in the external molecular layer of the dentate gyrus and in motoneurons of the ventral horn of spinal cord.</text>
</comment>
<comment type="similarity">
    <text evidence="2">Belongs to the strumpellin family.</text>
</comment>
<dbReference type="EMBL" id="CR860817">
    <property type="protein sequence ID" value="CAH92926.1"/>
    <property type="molecule type" value="mRNA"/>
</dbReference>
<dbReference type="RefSeq" id="NP_001126722.1">
    <property type="nucleotide sequence ID" value="NM_001133250.2"/>
</dbReference>
<dbReference type="SMR" id="Q5R5P0"/>
<dbReference type="FunCoup" id="Q5R5P0">
    <property type="interactions" value="3366"/>
</dbReference>
<dbReference type="STRING" id="9601.ENSPPYP00000021175"/>
<dbReference type="GeneID" id="100173723"/>
<dbReference type="KEGG" id="pon:100173723"/>
<dbReference type="CTD" id="9897"/>
<dbReference type="eggNOG" id="KOG3666">
    <property type="taxonomic scope" value="Eukaryota"/>
</dbReference>
<dbReference type="InParanoid" id="Q5R5P0"/>
<dbReference type="OrthoDB" id="565118at2759"/>
<dbReference type="Proteomes" id="UP000001595">
    <property type="component" value="Unplaced"/>
</dbReference>
<dbReference type="GO" id="GO:0005829">
    <property type="term" value="C:cytosol"/>
    <property type="evidence" value="ECO:0007669"/>
    <property type="project" value="UniProtKB-SubCell"/>
</dbReference>
<dbReference type="GO" id="GO:0005769">
    <property type="term" value="C:early endosome"/>
    <property type="evidence" value="ECO:0007669"/>
    <property type="project" value="UniProtKB-SubCell"/>
</dbReference>
<dbReference type="GO" id="GO:0005783">
    <property type="term" value="C:endoplasmic reticulum"/>
    <property type="evidence" value="ECO:0007669"/>
    <property type="project" value="UniProtKB-SubCell"/>
</dbReference>
<dbReference type="GO" id="GO:0071203">
    <property type="term" value="C:WASH complex"/>
    <property type="evidence" value="ECO:0000250"/>
    <property type="project" value="UniProtKB"/>
</dbReference>
<dbReference type="GO" id="GO:0030041">
    <property type="term" value="P:actin filament polymerization"/>
    <property type="evidence" value="ECO:0007669"/>
    <property type="project" value="TreeGrafter"/>
</dbReference>
<dbReference type="GO" id="GO:0140285">
    <property type="term" value="P:endosome fission"/>
    <property type="evidence" value="ECO:0007669"/>
    <property type="project" value="TreeGrafter"/>
</dbReference>
<dbReference type="GO" id="GO:0007032">
    <property type="term" value="P:endosome organization"/>
    <property type="evidence" value="ECO:0007669"/>
    <property type="project" value="TreeGrafter"/>
</dbReference>
<dbReference type="GO" id="GO:0015031">
    <property type="term" value="P:protein transport"/>
    <property type="evidence" value="ECO:0007669"/>
    <property type="project" value="UniProtKB-KW"/>
</dbReference>
<dbReference type="GO" id="GO:0051125">
    <property type="term" value="P:regulation of actin nucleation"/>
    <property type="evidence" value="ECO:0007669"/>
    <property type="project" value="TreeGrafter"/>
</dbReference>
<dbReference type="InterPro" id="IPR019393">
    <property type="entry name" value="WASH_strumpellin"/>
</dbReference>
<dbReference type="PANTHER" id="PTHR15691">
    <property type="entry name" value="WASH COMPLEX SUBUNIT 5"/>
    <property type="match status" value="1"/>
</dbReference>
<dbReference type="PANTHER" id="PTHR15691:SF6">
    <property type="entry name" value="WASH COMPLEX SUBUNIT 5"/>
    <property type="match status" value="1"/>
</dbReference>
<dbReference type="Pfam" id="PF10266">
    <property type="entry name" value="Strumpellin"/>
    <property type="match status" value="1"/>
</dbReference>
<organism>
    <name type="scientific">Pongo abelii</name>
    <name type="common">Sumatran orangutan</name>
    <name type="synonym">Pongo pygmaeus abelii</name>
    <dbReference type="NCBI Taxonomy" id="9601"/>
    <lineage>
        <taxon>Eukaryota</taxon>
        <taxon>Metazoa</taxon>
        <taxon>Chordata</taxon>
        <taxon>Craniata</taxon>
        <taxon>Vertebrata</taxon>
        <taxon>Euteleostomi</taxon>
        <taxon>Mammalia</taxon>
        <taxon>Eutheria</taxon>
        <taxon>Euarchontoglires</taxon>
        <taxon>Primates</taxon>
        <taxon>Haplorrhini</taxon>
        <taxon>Catarrhini</taxon>
        <taxon>Hominidae</taxon>
        <taxon>Pongo</taxon>
    </lineage>
</organism>
<reference key="1">
    <citation type="submission" date="2004-11" db="EMBL/GenBank/DDBJ databases">
        <authorList>
            <consortium name="The German cDNA consortium"/>
        </authorList>
    </citation>
    <scope>NUCLEOTIDE SEQUENCE [LARGE SCALE MRNA]</scope>
    <source>
        <tissue>Kidney</tissue>
    </source>
</reference>
<protein>
    <recommendedName>
        <fullName evidence="1">WASH complex subunit 5</fullName>
    </recommendedName>
    <alternativeName>
        <fullName evidence="2">WASH complex subunit strumpellin</fullName>
    </alternativeName>
</protein>
<keyword id="KW-0963">Cytoplasm</keyword>
<keyword id="KW-0256">Endoplasmic reticulum</keyword>
<keyword id="KW-0967">Endosome</keyword>
<keyword id="KW-0597">Phosphoprotein</keyword>
<keyword id="KW-0653">Protein transport</keyword>
<keyword id="KW-1185">Reference proteome</keyword>
<keyword id="KW-0813">Transport</keyword>